<name>FDHE_SALPA</name>
<accession>Q5PKF1</accession>
<evidence type="ECO:0000255" key="1">
    <source>
        <dbReference type="HAMAP-Rule" id="MF_00611"/>
    </source>
</evidence>
<gene>
    <name evidence="1" type="primary">fdhE</name>
    <name type="ordered locus">SPA3876</name>
</gene>
<organism>
    <name type="scientific">Salmonella paratyphi A (strain ATCC 9150 / SARB42)</name>
    <dbReference type="NCBI Taxonomy" id="295319"/>
    <lineage>
        <taxon>Bacteria</taxon>
        <taxon>Pseudomonadati</taxon>
        <taxon>Pseudomonadota</taxon>
        <taxon>Gammaproteobacteria</taxon>
        <taxon>Enterobacterales</taxon>
        <taxon>Enterobacteriaceae</taxon>
        <taxon>Salmonella</taxon>
    </lineage>
</organism>
<keyword id="KW-0963">Cytoplasm</keyword>
<reference key="1">
    <citation type="journal article" date="2004" name="Nat. Genet.">
        <title>Comparison of genome degradation in Paratyphi A and Typhi, human-restricted serovars of Salmonella enterica that cause typhoid.</title>
        <authorList>
            <person name="McClelland M."/>
            <person name="Sanderson K.E."/>
            <person name="Clifton S.W."/>
            <person name="Latreille P."/>
            <person name="Porwollik S."/>
            <person name="Sabo A."/>
            <person name="Meyer R."/>
            <person name="Bieri T."/>
            <person name="Ozersky P."/>
            <person name="McLellan M."/>
            <person name="Harkins C.R."/>
            <person name="Wang C."/>
            <person name="Nguyen C."/>
            <person name="Berghoff A."/>
            <person name="Elliott G."/>
            <person name="Kohlberg S."/>
            <person name="Strong C."/>
            <person name="Du F."/>
            <person name="Carter J."/>
            <person name="Kremizki C."/>
            <person name="Layman D."/>
            <person name="Leonard S."/>
            <person name="Sun H."/>
            <person name="Fulton L."/>
            <person name="Nash W."/>
            <person name="Miner T."/>
            <person name="Minx P."/>
            <person name="Delehaunty K."/>
            <person name="Fronick C."/>
            <person name="Magrini V."/>
            <person name="Nhan M."/>
            <person name="Warren W."/>
            <person name="Florea L."/>
            <person name="Spieth J."/>
            <person name="Wilson R.K."/>
        </authorList>
    </citation>
    <scope>NUCLEOTIDE SEQUENCE [LARGE SCALE GENOMIC DNA]</scope>
    <source>
        <strain>ATCC 9150 / SARB42</strain>
    </source>
</reference>
<sequence length="309" mass="34791">MSIRIIPQDELGSSEKRTADMIPPLLFPRLKNVYNRRAERLRELAENNPLGDYLRFAALIAHAQEVVLYDHPLEMDLTARIKEANDQGKPPLDIHVLPRDKHWQKLLHSLIAELKPEMNGPALAVIENLEKASEQELEQMASALFASDFASVSSDKAPFIWAALSLYWAQMASLIPGKARAEYGEARQYCPVCGSMPVSSMVQIDTTQGLRYLHCNLCETEWHVVRVKCSNCEQSRDLHYWSLENEQAAVKAESCGDCGTYLKILYQEKDPKVEAVADDLASLVLDARMEQEGFARSSINPFLFPGEGE</sequence>
<feature type="chain" id="PRO_1000056710" description="Protein FdhE">
    <location>
        <begin position="1"/>
        <end position="309"/>
    </location>
</feature>
<proteinExistence type="inferred from homology"/>
<dbReference type="EMBL" id="CP000026">
    <property type="protein sequence ID" value="AAV79643.1"/>
    <property type="molecule type" value="Genomic_DNA"/>
</dbReference>
<dbReference type="RefSeq" id="WP_000027726.1">
    <property type="nucleotide sequence ID" value="NC_006511.1"/>
</dbReference>
<dbReference type="SMR" id="Q5PKF1"/>
<dbReference type="KEGG" id="spt:SPA3876"/>
<dbReference type="HOGENOM" id="CLU_055275_0_0_6"/>
<dbReference type="Proteomes" id="UP000008185">
    <property type="component" value="Chromosome"/>
</dbReference>
<dbReference type="GO" id="GO:0005829">
    <property type="term" value="C:cytosol"/>
    <property type="evidence" value="ECO:0007669"/>
    <property type="project" value="TreeGrafter"/>
</dbReference>
<dbReference type="GO" id="GO:0008199">
    <property type="term" value="F:ferric iron binding"/>
    <property type="evidence" value="ECO:0007669"/>
    <property type="project" value="TreeGrafter"/>
</dbReference>
<dbReference type="GO" id="GO:0051604">
    <property type="term" value="P:protein maturation"/>
    <property type="evidence" value="ECO:0007669"/>
    <property type="project" value="TreeGrafter"/>
</dbReference>
<dbReference type="CDD" id="cd16341">
    <property type="entry name" value="FdhE"/>
    <property type="match status" value="1"/>
</dbReference>
<dbReference type="FunFam" id="3.90.1670.10:FF:000001">
    <property type="entry name" value="Protein FdhE"/>
    <property type="match status" value="1"/>
</dbReference>
<dbReference type="Gene3D" id="3.90.1670.10">
    <property type="entry name" value="FdhE-like domain"/>
    <property type="match status" value="1"/>
</dbReference>
<dbReference type="HAMAP" id="MF_00611">
    <property type="entry name" value="FdeH"/>
    <property type="match status" value="1"/>
</dbReference>
<dbReference type="InterPro" id="IPR024064">
    <property type="entry name" value="FdhE-like_sf"/>
</dbReference>
<dbReference type="InterPro" id="IPR056796">
    <property type="entry name" value="FdhE_C"/>
</dbReference>
<dbReference type="InterPro" id="IPR056797">
    <property type="entry name" value="FdhE_central"/>
</dbReference>
<dbReference type="InterPro" id="IPR056774">
    <property type="entry name" value="FdhE_N"/>
</dbReference>
<dbReference type="InterPro" id="IPR006452">
    <property type="entry name" value="Formate_DH_accessory"/>
</dbReference>
<dbReference type="NCBIfam" id="TIGR01562">
    <property type="entry name" value="FdhE"/>
    <property type="match status" value="1"/>
</dbReference>
<dbReference type="NCBIfam" id="NF002925">
    <property type="entry name" value="PRK03564.1"/>
    <property type="match status" value="1"/>
</dbReference>
<dbReference type="PANTHER" id="PTHR37689">
    <property type="entry name" value="PROTEIN FDHE"/>
    <property type="match status" value="1"/>
</dbReference>
<dbReference type="PANTHER" id="PTHR37689:SF1">
    <property type="entry name" value="PROTEIN FDHE"/>
    <property type="match status" value="1"/>
</dbReference>
<dbReference type="Pfam" id="PF24860">
    <property type="entry name" value="FdhE_C"/>
    <property type="match status" value="1"/>
</dbReference>
<dbReference type="Pfam" id="PF24859">
    <property type="entry name" value="FdhE_central"/>
    <property type="match status" value="1"/>
</dbReference>
<dbReference type="Pfam" id="PF04216">
    <property type="entry name" value="FdhE_N"/>
    <property type="match status" value="1"/>
</dbReference>
<dbReference type="PIRSF" id="PIRSF018296">
    <property type="entry name" value="Format_dh_formtn"/>
    <property type="match status" value="1"/>
</dbReference>
<dbReference type="SUPFAM" id="SSF144020">
    <property type="entry name" value="FdhE-like"/>
    <property type="match status" value="1"/>
</dbReference>
<comment type="function">
    <text evidence="1">Necessary for formate dehydrogenase activity.</text>
</comment>
<comment type="subcellular location">
    <subcellularLocation>
        <location evidence="1">Cytoplasm</location>
    </subcellularLocation>
</comment>
<comment type="similarity">
    <text evidence="1">Belongs to the FdhE family.</text>
</comment>
<protein>
    <recommendedName>
        <fullName evidence="1">Protein FdhE</fullName>
    </recommendedName>
</protein>